<protein>
    <recommendedName>
        <fullName evidence="1">Probable 2,3-bisphosphoglycerate-independent phosphoglycerate mutase</fullName>
        <shortName evidence="1">BPG-independent PGAM</shortName>
        <shortName evidence="1">Phosphoglyceromutase</shortName>
        <shortName evidence="1">aPGAM</shortName>
        <ecNumber evidence="1">5.4.2.12</ecNumber>
    </recommendedName>
</protein>
<gene>
    <name evidence="1" type="primary">apgM</name>
    <name type="ordered locus">DR_2227</name>
</gene>
<sequence length="410" mass="44109">MSDLLDTVRGLAKKTDSKILMVVLDGVGGLPLTVNGDTELATARTPNLDALAQESQLGQLELVGAGITPGSGPGHLSLFGYDPLKYVVGRGALSAVGIGVKLNRGDVAVRGNFATLGAGRLILDRRAGRPSDEKNAEIVAKLRAAIPEIDGVAVEVYTESEHRFVVVFRAPEGQPLGANISDVDPQVTGVEPKTAIANDPSSEVTAGLINTFVARAEVALADEPQVNGVLFRGYSDVPHFPSFEDAYQLKAACIASYPMYKGLASLVGMDVLPVEGHEDALEGKVKALRENWAKYDFFYFHIKKTDSTGEDGDFAEKVHKIELFDELLPQLLELQPDVIAVVGDHSTPSKLKSHSWHPVPLLIRSNYGRRDPAQRYTEEEAARGTLGLRHGPDLMPLLMANALKLNKYGA</sequence>
<keyword id="KW-0324">Glycolysis</keyword>
<keyword id="KW-0413">Isomerase</keyword>
<keyword id="KW-1185">Reference proteome</keyword>
<accession>Q9RSA0</accession>
<comment type="function">
    <text evidence="1">Catalyzes the interconversion of 2-phosphoglycerate and 3-phosphoglycerate.</text>
</comment>
<comment type="catalytic activity">
    <reaction evidence="1">
        <text>(2R)-2-phosphoglycerate = (2R)-3-phosphoglycerate</text>
        <dbReference type="Rhea" id="RHEA:15901"/>
        <dbReference type="ChEBI" id="CHEBI:58272"/>
        <dbReference type="ChEBI" id="CHEBI:58289"/>
        <dbReference type="EC" id="5.4.2.12"/>
    </reaction>
</comment>
<comment type="pathway">
    <text evidence="1">Carbohydrate degradation; glycolysis; pyruvate from D-glyceraldehyde 3-phosphate: step 3/5.</text>
</comment>
<comment type="similarity">
    <text evidence="1">Belongs to the BPG-independent phosphoglycerate mutase family. A-PGAM subfamily.</text>
</comment>
<feature type="chain" id="PRO_0000138153" description="Probable 2,3-bisphosphoglycerate-independent phosphoglycerate mutase">
    <location>
        <begin position="1"/>
        <end position="410"/>
    </location>
</feature>
<evidence type="ECO:0000255" key="1">
    <source>
        <dbReference type="HAMAP-Rule" id="MF_01402"/>
    </source>
</evidence>
<name>APGM_DEIRA</name>
<proteinExistence type="inferred from homology"/>
<dbReference type="EC" id="5.4.2.12" evidence="1"/>
<dbReference type="EMBL" id="AE000513">
    <property type="protein sequence ID" value="AAF11775.1"/>
    <property type="molecule type" value="Genomic_DNA"/>
</dbReference>
<dbReference type="PIR" id="A75300">
    <property type="entry name" value="A75300"/>
</dbReference>
<dbReference type="RefSeq" id="NP_295949.1">
    <property type="nucleotide sequence ID" value="NC_001263.1"/>
</dbReference>
<dbReference type="RefSeq" id="WP_010888856.1">
    <property type="nucleotide sequence ID" value="NC_001263.1"/>
</dbReference>
<dbReference type="SMR" id="Q9RSA0"/>
<dbReference type="STRING" id="243230.DR_2227"/>
<dbReference type="PaxDb" id="243230-DR_2227"/>
<dbReference type="EnsemblBacteria" id="AAF11775">
    <property type="protein sequence ID" value="AAF11775"/>
    <property type="gene ID" value="DR_2227"/>
</dbReference>
<dbReference type="GeneID" id="69518476"/>
<dbReference type="KEGG" id="dra:DR_2227"/>
<dbReference type="PATRIC" id="fig|243230.17.peg.2455"/>
<dbReference type="eggNOG" id="COG3635">
    <property type="taxonomic scope" value="Bacteria"/>
</dbReference>
<dbReference type="HOGENOM" id="CLU_034906_2_0_0"/>
<dbReference type="InParanoid" id="Q9RSA0"/>
<dbReference type="OrthoDB" id="9804453at2"/>
<dbReference type="UniPathway" id="UPA00109">
    <property type="reaction ID" value="UER00186"/>
</dbReference>
<dbReference type="Proteomes" id="UP000002524">
    <property type="component" value="Chromosome 1"/>
</dbReference>
<dbReference type="GO" id="GO:0046872">
    <property type="term" value="F:metal ion binding"/>
    <property type="evidence" value="ECO:0007669"/>
    <property type="project" value="InterPro"/>
</dbReference>
<dbReference type="GO" id="GO:0004619">
    <property type="term" value="F:phosphoglycerate mutase activity"/>
    <property type="evidence" value="ECO:0007669"/>
    <property type="project" value="UniProtKB-EC"/>
</dbReference>
<dbReference type="GO" id="GO:0006096">
    <property type="term" value="P:glycolytic process"/>
    <property type="evidence" value="ECO:0007669"/>
    <property type="project" value="UniProtKB-UniRule"/>
</dbReference>
<dbReference type="CDD" id="cd16011">
    <property type="entry name" value="iPGM_like"/>
    <property type="match status" value="1"/>
</dbReference>
<dbReference type="Gene3D" id="3.40.720.10">
    <property type="entry name" value="Alkaline Phosphatase, subunit A"/>
    <property type="match status" value="2"/>
</dbReference>
<dbReference type="HAMAP" id="MF_01402_B">
    <property type="entry name" value="ApgM_B"/>
    <property type="match status" value="1"/>
</dbReference>
<dbReference type="InterPro" id="IPR017850">
    <property type="entry name" value="Alkaline_phosphatase_core_sf"/>
</dbReference>
<dbReference type="InterPro" id="IPR023665">
    <property type="entry name" value="ApgAM_prokaryotes"/>
</dbReference>
<dbReference type="InterPro" id="IPR006124">
    <property type="entry name" value="Metalloenzyme"/>
</dbReference>
<dbReference type="InterPro" id="IPR004456">
    <property type="entry name" value="Pglycerate_mutase_ApgM"/>
</dbReference>
<dbReference type="NCBIfam" id="TIGR00306">
    <property type="entry name" value="apgM"/>
    <property type="match status" value="1"/>
</dbReference>
<dbReference type="NCBIfam" id="NF003160">
    <property type="entry name" value="PRK04135.1"/>
    <property type="match status" value="1"/>
</dbReference>
<dbReference type="PANTHER" id="PTHR31209">
    <property type="entry name" value="COFACTOR-INDEPENDENT PHOSPHOGLYCERATE MUTASE"/>
    <property type="match status" value="1"/>
</dbReference>
<dbReference type="PANTHER" id="PTHR31209:SF0">
    <property type="entry name" value="METALLOENZYME DOMAIN-CONTAINING PROTEIN"/>
    <property type="match status" value="1"/>
</dbReference>
<dbReference type="Pfam" id="PF01676">
    <property type="entry name" value="Metalloenzyme"/>
    <property type="match status" value="1"/>
</dbReference>
<dbReference type="Pfam" id="PF10143">
    <property type="entry name" value="PhosphMutase"/>
    <property type="match status" value="1"/>
</dbReference>
<dbReference type="PIRSF" id="PIRSF006392">
    <property type="entry name" value="IPGAM_arch"/>
    <property type="match status" value="1"/>
</dbReference>
<dbReference type="SUPFAM" id="SSF53649">
    <property type="entry name" value="Alkaline phosphatase-like"/>
    <property type="match status" value="1"/>
</dbReference>
<reference key="1">
    <citation type="journal article" date="1999" name="Science">
        <title>Genome sequence of the radioresistant bacterium Deinococcus radiodurans R1.</title>
        <authorList>
            <person name="White O."/>
            <person name="Eisen J.A."/>
            <person name="Heidelberg J.F."/>
            <person name="Hickey E.K."/>
            <person name="Peterson J.D."/>
            <person name="Dodson R.J."/>
            <person name="Haft D.H."/>
            <person name="Gwinn M.L."/>
            <person name="Nelson W.C."/>
            <person name="Richardson D.L."/>
            <person name="Moffat K.S."/>
            <person name="Qin H."/>
            <person name="Jiang L."/>
            <person name="Pamphile W."/>
            <person name="Crosby M."/>
            <person name="Shen M."/>
            <person name="Vamathevan J.J."/>
            <person name="Lam P."/>
            <person name="McDonald L.A."/>
            <person name="Utterback T.R."/>
            <person name="Zalewski C."/>
            <person name="Makarova K.S."/>
            <person name="Aravind L."/>
            <person name="Daly M.J."/>
            <person name="Minton K.W."/>
            <person name="Fleischmann R.D."/>
            <person name="Ketchum K.A."/>
            <person name="Nelson K.E."/>
            <person name="Salzberg S.L."/>
            <person name="Smith H.O."/>
            <person name="Venter J.C."/>
            <person name="Fraser C.M."/>
        </authorList>
    </citation>
    <scope>NUCLEOTIDE SEQUENCE [LARGE SCALE GENOMIC DNA]</scope>
    <source>
        <strain>ATCC 13939 / DSM 20539 / JCM 16871 / CCUG 27074 / LMG 4051 / NBRC 15346 / NCIMB 9279 / VKM B-1422 / R1</strain>
    </source>
</reference>
<organism>
    <name type="scientific">Deinococcus radiodurans (strain ATCC 13939 / DSM 20539 / JCM 16871 / CCUG 27074 / LMG 4051 / NBRC 15346 / NCIMB 9279 / VKM B-1422 / R1)</name>
    <dbReference type="NCBI Taxonomy" id="243230"/>
    <lineage>
        <taxon>Bacteria</taxon>
        <taxon>Thermotogati</taxon>
        <taxon>Deinococcota</taxon>
        <taxon>Deinococci</taxon>
        <taxon>Deinococcales</taxon>
        <taxon>Deinococcaceae</taxon>
        <taxon>Deinococcus</taxon>
    </lineage>
</organism>